<name>RS19_POLAQ</name>
<gene>
    <name evidence="1" type="primary">rpsS</name>
    <name type="ordered locus">Pnuc_0057</name>
</gene>
<dbReference type="EMBL" id="CP000655">
    <property type="protein sequence ID" value="ABP33279.1"/>
    <property type="molecule type" value="Genomic_DNA"/>
</dbReference>
<dbReference type="RefSeq" id="WP_011901904.1">
    <property type="nucleotide sequence ID" value="NC_009379.1"/>
</dbReference>
<dbReference type="SMR" id="A4SUW5"/>
<dbReference type="GeneID" id="83596661"/>
<dbReference type="KEGG" id="pnu:Pnuc_0057"/>
<dbReference type="eggNOG" id="COG0185">
    <property type="taxonomic scope" value="Bacteria"/>
</dbReference>
<dbReference type="HOGENOM" id="CLU_144911_0_1_4"/>
<dbReference type="Proteomes" id="UP000000231">
    <property type="component" value="Chromosome"/>
</dbReference>
<dbReference type="GO" id="GO:0005737">
    <property type="term" value="C:cytoplasm"/>
    <property type="evidence" value="ECO:0007669"/>
    <property type="project" value="UniProtKB-ARBA"/>
</dbReference>
<dbReference type="GO" id="GO:0015935">
    <property type="term" value="C:small ribosomal subunit"/>
    <property type="evidence" value="ECO:0007669"/>
    <property type="project" value="InterPro"/>
</dbReference>
<dbReference type="GO" id="GO:0019843">
    <property type="term" value="F:rRNA binding"/>
    <property type="evidence" value="ECO:0007669"/>
    <property type="project" value="UniProtKB-UniRule"/>
</dbReference>
<dbReference type="GO" id="GO:0003735">
    <property type="term" value="F:structural constituent of ribosome"/>
    <property type="evidence" value="ECO:0007669"/>
    <property type="project" value="InterPro"/>
</dbReference>
<dbReference type="GO" id="GO:0000028">
    <property type="term" value="P:ribosomal small subunit assembly"/>
    <property type="evidence" value="ECO:0007669"/>
    <property type="project" value="TreeGrafter"/>
</dbReference>
<dbReference type="GO" id="GO:0006412">
    <property type="term" value="P:translation"/>
    <property type="evidence" value="ECO:0007669"/>
    <property type="project" value="UniProtKB-UniRule"/>
</dbReference>
<dbReference type="FunFam" id="3.30.860.10:FF:000001">
    <property type="entry name" value="30S ribosomal protein S19"/>
    <property type="match status" value="1"/>
</dbReference>
<dbReference type="Gene3D" id="3.30.860.10">
    <property type="entry name" value="30s Ribosomal Protein S19, Chain A"/>
    <property type="match status" value="1"/>
</dbReference>
<dbReference type="HAMAP" id="MF_00531">
    <property type="entry name" value="Ribosomal_uS19"/>
    <property type="match status" value="1"/>
</dbReference>
<dbReference type="InterPro" id="IPR002222">
    <property type="entry name" value="Ribosomal_uS19"/>
</dbReference>
<dbReference type="InterPro" id="IPR005732">
    <property type="entry name" value="Ribosomal_uS19_bac-type"/>
</dbReference>
<dbReference type="InterPro" id="IPR020934">
    <property type="entry name" value="Ribosomal_uS19_CS"/>
</dbReference>
<dbReference type="InterPro" id="IPR023575">
    <property type="entry name" value="Ribosomal_uS19_SF"/>
</dbReference>
<dbReference type="NCBIfam" id="TIGR01050">
    <property type="entry name" value="rpsS_bact"/>
    <property type="match status" value="1"/>
</dbReference>
<dbReference type="PANTHER" id="PTHR11880">
    <property type="entry name" value="RIBOSOMAL PROTEIN S19P FAMILY MEMBER"/>
    <property type="match status" value="1"/>
</dbReference>
<dbReference type="PANTHER" id="PTHR11880:SF8">
    <property type="entry name" value="SMALL RIBOSOMAL SUBUNIT PROTEIN US19M"/>
    <property type="match status" value="1"/>
</dbReference>
<dbReference type="Pfam" id="PF00203">
    <property type="entry name" value="Ribosomal_S19"/>
    <property type="match status" value="1"/>
</dbReference>
<dbReference type="PIRSF" id="PIRSF002144">
    <property type="entry name" value="Ribosomal_S19"/>
    <property type="match status" value="1"/>
</dbReference>
<dbReference type="PRINTS" id="PR00975">
    <property type="entry name" value="RIBOSOMALS19"/>
</dbReference>
<dbReference type="SUPFAM" id="SSF54570">
    <property type="entry name" value="Ribosomal protein S19"/>
    <property type="match status" value="1"/>
</dbReference>
<dbReference type="PROSITE" id="PS00323">
    <property type="entry name" value="RIBOSOMAL_S19"/>
    <property type="match status" value="1"/>
</dbReference>
<proteinExistence type="inferred from homology"/>
<feature type="chain" id="PRO_1000081783" description="Small ribosomal subunit protein uS19">
    <location>
        <begin position="1"/>
        <end position="92"/>
    </location>
</feature>
<keyword id="KW-1185">Reference proteome</keyword>
<keyword id="KW-0687">Ribonucleoprotein</keyword>
<keyword id="KW-0689">Ribosomal protein</keyword>
<keyword id="KW-0694">RNA-binding</keyword>
<keyword id="KW-0699">rRNA-binding</keyword>
<accession>A4SUW5</accession>
<reference key="1">
    <citation type="journal article" date="2012" name="Stand. Genomic Sci.">
        <title>Complete genome sequence of Polynucleobacter necessarius subsp. asymbioticus type strain (QLW-P1DMWA-1(T)).</title>
        <authorList>
            <person name="Meincke L."/>
            <person name="Copeland A."/>
            <person name="Lapidus A."/>
            <person name="Lucas S."/>
            <person name="Berry K.W."/>
            <person name="Del Rio T.G."/>
            <person name="Hammon N."/>
            <person name="Dalin E."/>
            <person name="Tice H."/>
            <person name="Pitluck S."/>
            <person name="Richardson P."/>
            <person name="Bruce D."/>
            <person name="Goodwin L."/>
            <person name="Han C."/>
            <person name="Tapia R."/>
            <person name="Detter J.C."/>
            <person name="Schmutz J."/>
            <person name="Brettin T."/>
            <person name="Larimer F."/>
            <person name="Land M."/>
            <person name="Hauser L."/>
            <person name="Kyrpides N.C."/>
            <person name="Ivanova N."/>
            <person name="Goker M."/>
            <person name="Woyke T."/>
            <person name="Wu Q.L."/>
            <person name="Pockl M."/>
            <person name="Hahn M.W."/>
            <person name="Klenk H.P."/>
        </authorList>
    </citation>
    <scope>NUCLEOTIDE SEQUENCE [LARGE SCALE GENOMIC DNA]</scope>
    <source>
        <strain>DSM 18221 / CIP 109841 / QLW-P1DMWA-1</strain>
    </source>
</reference>
<organism>
    <name type="scientific">Polynucleobacter asymbioticus (strain DSM 18221 / CIP 109841 / QLW-P1DMWA-1)</name>
    <name type="common">Polynucleobacter necessarius subsp. asymbioticus</name>
    <dbReference type="NCBI Taxonomy" id="312153"/>
    <lineage>
        <taxon>Bacteria</taxon>
        <taxon>Pseudomonadati</taxon>
        <taxon>Pseudomonadota</taxon>
        <taxon>Betaproteobacteria</taxon>
        <taxon>Burkholderiales</taxon>
        <taxon>Burkholderiaceae</taxon>
        <taxon>Polynucleobacter</taxon>
    </lineage>
</organism>
<evidence type="ECO:0000255" key="1">
    <source>
        <dbReference type="HAMAP-Rule" id="MF_00531"/>
    </source>
</evidence>
<evidence type="ECO:0000305" key="2"/>
<comment type="function">
    <text evidence="1">Protein S19 forms a complex with S13 that binds strongly to the 16S ribosomal RNA.</text>
</comment>
<comment type="similarity">
    <text evidence="1">Belongs to the universal ribosomal protein uS19 family.</text>
</comment>
<sequence>MTRSAKKGPFCDASLVKKVEVAQANKDKKPIKTWSRRSTILPDFIGLTIAVHNGRQHVPVYVSENMVGHKLGEFALTRTFKGHAADKKVTKK</sequence>
<protein>
    <recommendedName>
        <fullName evidence="1">Small ribosomal subunit protein uS19</fullName>
    </recommendedName>
    <alternativeName>
        <fullName evidence="2">30S ribosomal protein S19</fullName>
    </alternativeName>
</protein>